<gene>
    <name type="primary">lytS</name>
    <name type="ordered locus">BA_5692</name>
    <name type="ordered locus">GBAA_5692</name>
    <name type="ordered locus">BAS5296</name>
</gene>
<protein>
    <recommendedName>
        <fullName>Sensor protein LytS</fullName>
        <ecNumber>2.7.13.3</ecNumber>
    </recommendedName>
</protein>
<keyword id="KW-0067">ATP-binding</keyword>
<keyword id="KW-1003">Cell membrane</keyword>
<keyword id="KW-0418">Kinase</keyword>
<keyword id="KW-0472">Membrane</keyword>
<keyword id="KW-0547">Nucleotide-binding</keyword>
<keyword id="KW-0597">Phosphoprotein</keyword>
<keyword id="KW-1185">Reference proteome</keyword>
<keyword id="KW-0808">Transferase</keyword>
<keyword id="KW-0812">Transmembrane</keyword>
<keyword id="KW-1133">Transmembrane helix</keyword>
<keyword id="KW-0902">Two-component regulatory system</keyword>
<comment type="function">
    <text>Member of the two-component regulatory system LytS/LytT that probably regulates genes involved in cell wall metabolism.</text>
</comment>
<comment type="catalytic activity">
    <reaction>
        <text>ATP + protein L-histidine = ADP + protein N-phospho-L-histidine.</text>
        <dbReference type="EC" id="2.7.13.3"/>
    </reaction>
</comment>
<comment type="subcellular location">
    <subcellularLocation>
        <location evidence="3">Cell membrane</location>
        <topology evidence="3">Multi-pass membrane protein</topology>
    </subcellularLocation>
</comment>
<feature type="chain" id="PRO_0000074787" description="Sensor protein LytS">
    <location>
        <begin position="1"/>
        <end position="589"/>
    </location>
</feature>
<feature type="transmembrane region" description="Helical" evidence="1">
    <location>
        <begin position="4"/>
        <end position="25"/>
    </location>
</feature>
<feature type="transmembrane region" description="Helical" evidence="1">
    <location>
        <begin position="45"/>
        <end position="67"/>
    </location>
</feature>
<feature type="transmembrane region" description="Helical" evidence="1">
    <location>
        <begin position="87"/>
        <end position="109"/>
    </location>
</feature>
<feature type="transmembrane region" description="Helical" evidence="1">
    <location>
        <begin position="116"/>
        <end position="138"/>
    </location>
</feature>
<feature type="transmembrane region" description="Helical" evidence="1">
    <location>
        <begin position="153"/>
        <end position="172"/>
    </location>
</feature>
<feature type="transmembrane region" description="Helical" evidence="1">
    <location>
        <begin position="184"/>
        <end position="206"/>
    </location>
</feature>
<feature type="domain" description="GAF">
    <location>
        <begin position="235"/>
        <end position="360"/>
    </location>
</feature>
<feature type="domain" description="Histidine kinase" evidence="2">
    <location>
        <begin position="360"/>
        <end position="577"/>
    </location>
</feature>
<feature type="modified residue" description="Phosphohistidine; by autocatalysis" evidence="2">
    <location>
        <position position="387"/>
    </location>
</feature>
<proteinExistence type="inferred from homology"/>
<dbReference type="EC" id="2.7.13.3"/>
<dbReference type="EMBL" id="AE016879">
    <property type="protein sequence ID" value="AAP29324.1"/>
    <property type="molecule type" value="Genomic_DNA"/>
</dbReference>
<dbReference type="EMBL" id="AE017334">
    <property type="protein sequence ID" value="AAT34850.1"/>
    <property type="molecule type" value="Genomic_DNA"/>
</dbReference>
<dbReference type="EMBL" id="AE017225">
    <property type="protein sequence ID" value="AAT57583.1"/>
    <property type="molecule type" value="Genomic_DNA"/>
</dbReference>
<dbReference type="RefSeq" id="NP_847838.1">
    <property type="nucleotide sequence ID" value="NC_003997.3"/>
</dbReference>
<dbReference type="RefSeq" id="WP_000933570.1">
    <property type="nucleotide sequence ID" value="NZ_WXXJ01000017.1"/>
</dbReference>
<dbReference type="RefSeq" id="YP_031533.1">
    <property type="nucleotide sequence ID" value="NC_005945.1"/>
</dbReference>
<dbReference type="SMR" id="Q81JL2"/>
<dbReference type="STRING" id="261594.GBAA_5692"/>
<dbReference type="TCDB" id="9.B.33.1.1">
    <property type="family name" value="the sensor histidine kinase (shk) family"/>
</dbReference>
<dbReference type="DNASU" id="1085432"/>
<dbReference type="GeneID" id="45025267"/>
<dbReference type="KEGG" id="ban:BA_5692"/>
<dbReference type="KEGG" id="bar:GBAA_5692"/>
<dbReference type="KEGG" id="bat:BAS5296"/>
<dbReference type="PATRIC" id="fig|198094.11.peg.5654"/>
<dbReference type="eggNOG" id="COG3275">
    <property type="taxonomic scope" value="Bacteria"/>
</dbReference>
<dbReference type="HOGENOM" id="CLU_020473_3_3_9"/>
<dbReference type="OMA" id="SHFFRSN"/>
<dbReference type="OrthoDB" id="9776552at2"/>
<dbReference type="Proteomes" id="UP000000427">
    <property type="component" value="Chromosome"/>
</dbReference>
<dbReference type="Proteomes" id="UP000000594">
    <property type="component" value="Chromosome"/>
</dbReference>
<dbReference type="GO" id="GO:0005886">
    <property type="term" value="C:plasma membrane"/>
    <property type="evidence" value="ECO:0007669"/>
    <property type="project" value="UniProtKB-SubCell"/>
</dbReference>
<dbReference type="GO" id="GO:0005524">
    <property type="term" value="F:ATP binding"/>
    <property type="evidence" value="ECO:0007669"/>
    <property type="project" value="UniProtKB-KW"/>
</dbReference>
<dbReference type="GO" id="GO:0000155">
    <property type="term" value="F:phosphorelay sensor kinase activity"/>
    <property type="evidence" value="ECO:0007669"/>
    <property type="project" value="InterPro"/>
</dbReference>
<dbReference type="GO" id="GO:0071555">
    <property type="term" value="P:cell wall organization"/>
    <property type="evidence" value="ECO:0007669"/>
    <property type="project" value="InterPro"/>
</dbReference>
<dbReference type="CDD" id="cd16957">
    <property type="entry name" value="HATPase_LytS-like"/>
    <property type="match status" value="1"/>
</dbReference>
<dbReference type="Gene3D" id="3.30.450.40">
    <property type="match status" value="1"/>
</dbReference>
<dbReference type="Gene3D" id="3.30.565.10">
    <property type="entry name" value="Histidine kinase-like ATPase, C-terminal domain"/>
    <property type="match status" value="1"/>
</dbReference>
<dbReference type="InterPro" id="IPR050640">
    <property type="entry name" value="Bact_2-comp_sensor_kinase"/>
</dbReference>
<dbReference type="InterPro" id="IPR003018">
    <property type="entry name" value="GAF"/>
</dbReference>
<dbReference type="InterPro" id="IPR029016">
    <property type="entry name" value="GAF-like_dom_sf"/>
</dbReference>
<dbReference type="InterPro" id="IPR036890">
    <property type="entry name" value="HATPase_C_sf"/>
</dbReference>
<dbReference type="InterPro" id="IPR005467">
    <property type="entry name" value="His_kinase_dom"/>
</dbReference>
<dbReference type="InterPro" id="IPR010559">
    <property type="entry name" value="Sig_transdc_His_kin_internal"/>
</dbReference>
<dbReference type="InterPro" id="IPR011620">
    <property type="entry name" value="Sig_transdc_His_kinase_LytS_TM"/>
</dbReference>
<dbReference type="PANTHER" id="PTHR34220">
    <property type="entry name" value="SENSOR HISTIDINE KINASE YPDA"/>
    <property type="match status" value="1"/>
</dbReference>
<dbReference type="PANTHER" id="PTHR34220:SF7">
    <property type="entry name" value="SENSOR HISTIDINE KINASE YPDA"/>
    <property type="match status" value="1"/>
</dbReference>
<dbReference type="Pfam" id="PF07694">
    <property type="entry name" value="5TM-5TMR_LYT"/>
    <property type="match status" value="1"/>
</dbReference>
<dbReference type="Pfam" id="PF01590">
    <property type="entry name" value="GAF"/>
    <property type="match status" value="1"/>
</dbReference>
<dbReference type="Pfam" id="PF02518">
    <property type="entry name" value="HATPase_c"/>
    <property type="match status" value="1"/>
</dbReference>
<dbReference type="Pfam" id="PF06580">
    <property type="entry name" value="His_kinase"/>
    <property type="match status" value="1"/>
</dbReference>
<dbReference type="SMART" id="SM00065">
    <property type="entry name" value="GAF"/>
    <property type="match status" value="1"/>
</dbReference>
<dbReference type="SMART" id="SM00387">
    <property type="entry name" value="HATPase_c"/>
    <property type="match status" value="1"/>
</dbReference>
<dbReference type="SUPFAM" id="SSF55874">
    <property type="entry name" value="ATPase domain of HSP90 chaperone/DNA topoisomerase II/histidine kinase"/>
    <property type="match status" value="1"/>
</dbReference>
<dbReference type="SUPFAM" id="SSF55781">
    <property type="entry name" value="GAF domain-like"/>
    <property type="match status" value="1"/>
</dbReference>
<dbReference type="PROSITE" id="PS50109">
    <property type="entry name" value="HIS_KIN"/>
    <property type="match status" value="1"/>
</dbReference>
<reference key="1">
    <citation type="journal article" date="2003" name="Nature">
        <title>The genome sequence of Bacillus anthracis Ames and comparison to closely related bacteria.</title>
        <authorList>
            <person name="Read T.D."/>
            <person name="Peterson S.N."/>
            <person name="Tourasse N.J."/>
            <person name="Baillie L.W."/>
            <person name="Paulsen I.T."/>
            <person name="Nelson K.E."/>
            <person name="Tettelin H."/>
            <person name="Fouts D.E."/>
            <person name="Eisen J.A."/>
            <person name="Gill S.R."/>
            <person name="Holtzapple E.K."/>
            <person name="Okstad O.A."/>
            <person name="Helgason E."/>
            <person name="Rilstone J."/>
            <person name="Wu M."/>
            <person name="Kolonay J.F."/>
            <person name="Beanan M.J."/>
            <person name="Dodson R.J."/>
            <person name="Brinkac L.M."/>
            <person name="Gwinn M.L."/>
            <person name="DeBoy R.T."/>
            <person name="Madpu R."/>
            <person name="Daugherty S.C."/>
            <person name="Durkin A.S."/>
            <person name="Haft D.H."/>
            <person name="Nelson W.C."/>
            <person name="Peterson J.D."/>
            <person name="Pop M."/>
            <person name="Khouri H.M."/>
            <person name="Radune D."/>
            <person name="Benton J.L."/>
            <person name="Mahamoud Y."/>
            <person name="Jiang L."/>
            <person name="Hance I.R."/>
            <person name="Weidman J.F."/>
            <person name="Berry K.J."/>
            <person name="Plaut R.D."/>
            <person name="Wolf A.M."/>
            <person name="Watkins K.L."/>
            <person name="Nierman W.C."/>
            <person name="Hazen A."/>
            <person name="Cline R.T."/>
            <person name="Redmond C."/>
            <person name="Thwaite J.E."/>
            <person name="White O."/>
            <person name="Salzberg S.L."/>
            <person name="Thomason B."/>
            <person name="Friedlander A.M."/>
            <person name="Koehler T.M."/>
            <person name="Hanna P.C."/>
            <person name="Kolstoe A.-B."/>
            <person name="Fraser C.M."/>
        </authorList>
    </citation>
    <scope>NUCLEOTIDE SEQUENCE [LARGE SCALE GENOMIC DNA]</scope>
    <source>
        <strain>Ames / isolate Porton</strain>
    </source>
</reference>
<reference key="2">
    <citation type="journal article" date="2009" name="J. Bacteriol.">
        <title>The complete genome sequence of Bacillus anthracis Ames 'Ancestor'.</title>
        <authorList>
            <person name="Ravel J."/>
            <person name="Jiang L."/>
            <person name="Stanley S.T."/>
            <person name="Wilson M.R."/>
            <person name="Decker R.S."/>
            <person name="Read T.D."/>
            <person name="Worsham P."/>
            <person name="Keim P.S."/>
            <person name="Salzberg S.L."/>
            <person name="Fraser-Liggett C.M."/>
            <person name="Rasko D.A."/>
        </authorList>
    </citation>
    <scope>NUCLEOTIDE SEQUENCE [LARGE SCALE GENOMIC DNA]</scope>
    <source>
        <strain>Ames ancestor</strain>
    </source>
</reference>
<reference key="3">
    <citation type="submission" date="2004-01" db="EMBL/GenBank/DDBJ databases">
        <title>Complete genome sequence of Bacillus anthracis Sterne.</title>
        <authorList>
            <person name="Brettin T.S."/>
            <person name="Bruce D."/>
            <person name="Challacombe J.F."/>
            <person name="Gilna P."/>
            <person name="Han C."/>
            <person name="Hill K."/>
            <person name="Hitchcock P."/>
            <person name="Jackson P."/>
            <person name="Keim P."/>
            <person name="Longmire J."/>
            <person name="Lucas S."/>
            <person name="Okinaka R."/>
            <person name="Richardson P."/>
            <person name="Rubin E."/>
            <person name="Tice H."/>
        </authorList>
    </citation>
    <scope>NUCLEOTIDE SEQUENCE [LARGE SCALE GENOMIC DNA]</scope>
    <source>
        <strain>Sterne</strain>
    </source>
</reference>
<evidence type="ECO:0000255" key="1"/>
<evidence type="ECO:0000255" key="2">
    <source>
        <dbReference type="PROSITE-ProRule" id="PRU00107"/>
    </source>
</evidence>
<evidence type="ECO:0000305" key="3"/>
<organism>
    <name type="scientific">Bacillus anthracis</name>
    <dbReference type="NCBI Taxonomy" id="1392"/>
    <lineage>
        <taxon>Bacteria</taxon>
        <taxon>Bacillati</taxon>
        <taxon>Bacillota</taxon>
        <taxon>Bacilli</taxon>
        <taxon>Bacillales</taxon>
        <taxon>Bacillaceae</taxon>
        <taxon>Bacillus</taxon>
        <taxon>Bacillus cereus group</taxon>
    </lineage>
</organism>
<name>LYTS_BACAN</name>
<accession>Q81JL2</accession>
<accession>Q6HQ55</accession>
<accession>Q6KJJ7</accession>
<sequence>MLNLVLMMIERVGLIVILGFLLSHIKTFRRLLHKQDGYVDKLKLICIFSVFTIVSNYTGIEIAGNTIMNENWLQGVSSSSTIANTRIMGVGISGLLGGPIVGIGVGSIAGIHRYMLGGTTALSCAISSILAGVITGYIGYIFKKYNRTITPKFSAVLSVFIVSLEMIMILLIVEDGISIVKTIAIPMILVNSFGSFILLSMIQAILRQEENAKALQTHKVLRIADKTLPYFRQGLTEESCKHVAQIIHRFTGTDAVSLTDTEKILAHVGLASDHHIPSHSLITGLSKEVLHTGKIMKAKSREVINCQHEGCPLQAAIVIPLTSHGNTIGTLKLYFKNPNQLSRVEEELAEGLAKIFSTQLELGEAELQSKLLQDAEIKALQAQINPHFLFNAINTVSALCRTDVEKARKLLLQLSVYFRCNLQGARQLLIPLEQELNHVQAYLSLEQARFPNKYEVKMYIEDELKTTLVPPFVLQLLVENALRHAFPKKQPVCEVEVHVFEKEGMVHFEVKDNGQGIEEERLEQLGKMVVSSKKGTGTALYNINERLIGLFGKETMLHIESEVNEGTEITFVIPKKVGEEEQIVKSISS</sequence>